<sequence>MIGLVGRKVGMTRIFNEDGVSVPVTVIEIEANRVTQVKTLENDGYTAVQVTTGSKKANRVTKPEAGHFVKAGVEAGRGLWEFRTEGEEFTLGQEINVDIFADVKKVDVTGTSKGKGFQGGVKRWNFRTQDATHGNSLSHRVLGSIGQNQTPGRVFKGKKMAGHLGAERVTVQSLEVVRVDAERKLLLVKGSVPGAINGDVIVKPAVKA</sequence>
<keyword id="KW-0488">Methylation</keyword>
<keyword id="KW-0687">Ribonucleoprotein</keyword>
<keyword id="KW-0689">Ribosomal protein</keyword>
<keyword id="KW-0694">RNA-binding</keyword>
<keyword id="KW-0699">rRNA-binding</keyword>
<gene>
    <name evidence="1" type="primary">rplC</name>
    <name type="ordered locus">NTHI0938</name>
</gene>
<proteinExistence type="inferred from homology"/>
<protein>
    <recommendedName>
        <fullName evidence="1">Large ribosomal subunit protein uL3</fullName>
    </recommendedName>
    <alternativeName>
        <fullName evidence="2">50S ribosomal protein L3</fullName>
    </alternativeName>
</protein>
<dbReference type="EMBL" id="CP000057">
    <property type="protein sequence ID" value="AAX87825.1"/>
    <property type="molecule type" value="Genomic_DNA"/>
</dbReference>
<dbReference type="RefSeq" id="WP_005632753.1">
    <property type="nucleotide sequence ID" value="NC_007146.2"/>
</dbReference>
<dbReference type="SMR" id="Q4QMC2"/>
<dbReference type="GeneID" id="93298789"/>
<dbReference type="KEGG" id="hit:NTHI0938"/>
<dbReference type="HOGENOM" id="CLU_044142_4_1_6"/>
<dbReference type="Proteomes" id="UP000002525">
    <property type="component" value="Chromosome"/>
</dbReference>
<dbReference type="GO" id="GO:0022625">
    <property type="term" value="C:cytosolic large ribosomal subunit"/>
    <property type="evidence" value="ECO:0007669"/>
    <property type="project" value="TreeGrafter"/>
</dbReference>
<dbReference type="GO" id="GO:0019843">
    <property type="term" value="F:rRNA binding"/>
    <property type="evidence" value="ECO:0007669"/>
    <property type="project" value="UniProtKB-UniRule"/>
</dbReference>
<dbReference type="GO" id="GO:0003735">
    <property type="term" value="F:structural constituent of ribosome"/>
    <property type="evidence" value="ECO:0007669"/>
    <property type="project" value="InterPro"/>
</dbReference>
<dbReference type="GO" id="GO:0006412">
    <property type="term" value="P:translation"/>
    <property type="evidence" value="ECO:0007669"/>
    <property type="project" value="UniProtKB-UniRule"/>
</dbReference>
<dbReference type="FunFam" id="2.40.30.10:FF:000004">
    <property type="entry name" value="50S ribosomal protein L3"/>
    <property type="match status" value="1"/>
</dbReference>
<dbReference type="FunFam" id="3.30.160.810:FF:000001">
    <property type="entry name" value="50S ribosomal protein L3"/>
    <property type="match status" value="1"/>
</dbReference>
<dbReference type="Gene3D" id="3.30.160.810">
    <property type="match status" value="1"/>
</dbReference>
<dbReference type="Gene3D" id="2.40.30.10">
    <property type="entry name" value="Translation factors"/>
    <property type="match status" value="1"/>
</dbReference>
<dbReference type="HAMAP" id="MF_01325_B">
    <property type="entry name" value="Ribosomal_uL3_B"/>
    <property type="match status" value="1"/>
</dbReference>
<dbReference type="InterPro" id="IPR000597">
    <property type="entry name" value="Ribosomal_uL3"/>
</dbReference>
<dbReference type="InterPro" id="IPR019927">
    <property type="entry name" value="Ribosomal_uL3_bac/org-type"/>
</dbReference>
<dbReference type="InterPro" id="IPR019926">
    <property type="entry name" value="Ribosomal_uL3_CS"/>
</dbReference>
<dbReference type="InterPro" id="IPR009000">
    <property type="entry name" value="Transl_B-barrel_sf"/>
</dbReference>
<dbReference type="NCBIfam" id="TIGR03625">
    <property type="entry name" value="L3_bact"/>
    <property type="match status" value="1"/>
</dbReference>
<dbReference type="PANTHER" id="PTHR11229">
    <property type="entry name" value="50S RIBOSOMAL PROTEIN L3"/>
    <property type="match status" value="1"/>
</dbReference>
<dbReference type="PANTHER" id="PTHR11229:SF16">
    <property type="entry name" value="LARGE RIBOSOMAL SUBUNIT PROTEIN UL3C"/>
    <property type="match status" value="1"/>
</dbReference>
<dbReference type="Pfam" id="PF00297">
    <property type="entry name" value="Ribosomal_L3"/>
    <property type="match status" value="1"/>
</dbReference>
<dbReference type="SUPFAM" id="SSF50447">
    <property type="entry name" value="Translation proteins"/>
    <property type="match status" value="1"/>
</dbReference>
<dbReference type="PROSITE" id="PS00474">
    <property type="entry name" value="RIBOSOMAL_L3"/>
    <property type="match status" value="1"/>
</dbReference>
<accession>Q4QMC2</accession>
<name>RL3_HAEI8</name>
<evidence type="ECO:0000255" key="1">
    <source>
        <dbReference type="HAMAP-Rule" id="MF_01325"/>
    </source>
</evidence>
<evidence type="ECO:0000305" key="2"/>
<feature type="chain" id="PRO_0000241351" description="Large ribosomal subunit protein uL3">
    <location>
        <begin position="1"/>
        <end position="208"/>
    </location>
</feature>
<feature type="modified residue" description="N5-methylglutamine" evidence="1">
    <location>
        <position position="149"/>
    </location>
</feature>
<organism>
    <name type="scientific">Haemophilus influenzae (strain 86-028NP)</name>
    <dbReference type="NCBI Taxonomy" id="281310"/>
    <lineage>
        <taxon>Bacteria</taxon>
        <taxon>Pseudomonadati</taxon>
        <taxon>Pseudomonadota</taxon>
        <taxon>Gammaproteobacteria</taxon>
        <taxon>Pasteurellales</taxon>
        <taxon>Pasteurellaceae</taxon>
        <taxon>Haemophilus</taxon>
    </lineage>
</organism>
<comment type="function">
    <text evidence="1">One of the primary rRNA binding proteins, it binds directly near the 3'-end of the 23S rRNA, where it nucleates assembly of the 50S subunit.</text>
</comment>
<comment type="subunit">
    <text evidence="1">Part of the 50S ribosomal subunit. Forms a cluster with proteins L14 and L19.</text>
</comment>
<comment type="PTM">
    <text evidence="1">Methylated by PrmB.</text>
</comment>
<comment type="similarity">
    <text evidence="1">Belongs to the universal ribosomal protein uL3 family.</text>
</comment>
<reference key="1">
    <citation type="journal article" date="2005" name="J. Bacteriol.">
        <title>Genomic sequence of an otitis media isolate of nontypeable Haemophilus influenzae: comparative study with H. influenzae serotype d, strain KW20.</title>
        <authorList>
            <person name="Harrison A."/>
            <person name="Dyer D.W."/>
            <person name="Gillaspy A."/>
            <person name="Ray W.C."/>
            <person name="Mungur R."/>
            <person name="Carson M.B."/>
            <person name="Zhong H."/>
            <person name="Gipson J."/>
            <person name="Gipson M."/>
            <person name="Johnson L.S."/>
            <person name="Lewis L."/>
            <person name="Bakaletz L.O."/>
            <person name="Munson R.S. Jr."/>
        </authorList>
    </citation>
    <scope>NUCLEOTIDE SEQUENCE [LARGE SCALE GENOMIC DNA]</scope>
    <source>
        <strain>86-028NP</strain>
    </source>
</reference>